<evidence type="ECO:0000255" key="1">
    <source>
        <dbReference type="HAMAP-Rule" id="MF_00527"/>
    </source>
</evidence>
<organism>
    <name type="scientific">Nitrosococcus oceani (strain ATCC 19707 / BCRC 17464 / JCM 30415 / NCIMB 11848 / C-107)</name>
    <dbReference type="NCBI Taxonomy" id="323261"/>
    <lineage>
        <taxon>Bacteria</taxon>
        <taxon>Pseudomonadati</taxon>
        <taxon>Pseudomonadota</taxon>
        <taxon>Gammaproteobacteria</taxon>
        <taxon>Chromatiales</taxon>
        <taxon>Chromatiaceae</taxon>
        <taxon>Nitrosococcus</taxon>
    </lineage>
</organism>
<protein>
    <recommendedName>
        <fullName evidence="1">Putative 3-methyladenine DNA glycosylase</fullName>
        <ecNumber evidence="1">3.2.2.-</ecNumber>
    </recommendedName>
</protein>
<dbReference type="EC" id="3.2.2.-" evidence="1"/>
<dbReference type="EMBL" id="CP000127">
    <property type="protein sequence ID" value="ABA56616.1"/>
    <property type="molecule type" value="Genomic_DNA"/>
</dbReference>
<dbReference type="RefSeq" id="WP_002812620.1">
    <property type="nucleotide sequence ID" value="NC_007484.1"/>
</dbReference>
<dbReference type="SMR" id="Q3JEY0"/>
<dbReference type="STRING" id="323261.Noc_0079"/>
<dbReference type="KEGG" id="noc:Noc_0079"/>
<dbReference type="eggNOG" id="COG2094">
    <property type="taxonomic scope" value="Bacteria"/>
</dbReference>
<dbReference type="HOGENOM" id="CLU_060471_1_0_6"/>
<dbReference type="InParanoid" id="Q3JEY0"/>
<dbReference type="Proteomes" id="UP000006838">
    <property type="component" value="Chromosome"/>
</dbReference>
<dbReference type="GO" id="GO:0003905">
    <property type="term" value="F:alkylbase DNA N-glycosylase activity"/>
    <property type="evidence" value="ECO:0007669"/>
    <property type="project" value="InterPro"/>
</dbReference>
<dbReference type="GO" id="GO:0003677">
    <property type="term" value="F:DNA binding"/>
    <property type="evidence" value="ECO:0007669"/>
    <property type="project" value="InterPro"/>
</dbReference>
<dbReference type="GO" id="GO:0006284">
    <property type="term" value="P:base-excision repair"/>
    <property type="evidence" value="ECO:0007669"/>
    <property type="project" value="InterPro"/>
</dbReference>
<dbReference type="CDD" id="cd00540">
    <property type="entry name" value="AAG"/>
    <property type="match status" value="1"/>
</dbReference>
<dbReference type="FunFam" id="3.10.300.10:FF:000001">
    <property type="entry name" value="Putative 3-methyladenine DNA glycosylase"/>
    <property type="match status" value="1"/>
</dbReference>
<dbReference type="Gene3D" id="3.10.300.10">
    <property type="entry name" value="Methylpurine-DNA glycosylase (MPG)"/>
    <property type="match status" value="1"/>
</dbReference>
<dbReference type="HAMAP" id="MF_00527">
    <property type="entry name" value="3MGH"/>
    <property type="match status" value="1"/>
</dbReference>
<dbReference type="InterPro" id="IPR011034">
    <property type="entry name" value="Formyl_transferase-like_C_sf"/>
</dbReference>
<dbReference type="InterPro" id="IPR003180">
    <property type="entry name" value="MPG"/>
</dbReference>
<dbReference type="InterPro" id="IPR036995">
    <property type="entry name" value="MPG_sf"/>
</dbReference>
<dbReference type="NCBIfam" id="TIGR00567">
    <property type="entry name" value="3mg"/>
    <property type="match status" value="1"/>
</dbReference>
<dbReference type="NCBIfam" id="NF002003">
    <property type="entry name" value="PRK00802.1-3"/>
    <property type="match status" value="1"/>
</dbReference>
<dbReference type="PANTHER" id="PTHR10429">
    <property type="entry name" value="DNA-3-METHYLADENINE GLYCOSYLASE"/>
    <property type="match status" value="1"/>
</dbReference>
<dbReference type="PANTHER" id="PTHR10429:SF0">
    <property type="entry name" value="DNA-3-METHYLADENINE GLYCOSYLASE"/>
    <property type="match status" value="1"/>
</dbReference>
<dbReference type="Pfam" id="PF02245">
    <property type="entry name" value="Pur_DNA_glyco"/>
    <property type="match status" value="1"/>
</dbReference>
<dbReference type="SUPFAM" id="SSF50486">
    <property type="entry name" value="FMT C-terminal domain-like"/>
    <property type="match status" value="1"/>
</dbReference>
<feature type="chain" id="PRO_0000265040" description="Putative 3-methyladenine DNA glycosylase">
    <location>
        <begin position="1"/>
        <end position="201"/>
    </location>
</feature>
<reference key="1">
    <citation type="journal article" date="2006" name="Appl. Environ. Microbiol.">
        <title>Complete genome sequence of the marine, chemolithoautotrophic, ammonia-oxidizing bacterium Nitrosococcus oceani ATCC 19707.</title>
        <authorList>
            <person name="Klotz M.G."/>
            <person name="Arp D.J."/>
            <person name="Chain P.S.G."/>
            <person name="El-Sheikh A.F."/>
            <person name="Hauser L.J."/>
            <person name="Hommes N.G."/>
            <person name="Larimer F.W."/>
            <person name="Malfatti S.A."/>
            <person name="Norton J.M."/>
            <person name="Poret-Peterson A.T."/>
            <person name="Vergez L.M."/>
            <person name="Ward B.B."/>
        </authorList>
    </citation>
    <scope>NUCLEOTIDE SEQUENCE [LARGE SCALE GENOMIC DNA]</scope>
    <source>
        <strain>ATCC 19707 / BCRC 17464 / JCM 30415 / NCIMB 11848 / C-107</strain>
    </source>
</reference>
<name>3MGH_NITOC</name>
<keyword id="KW-0227">DNA damage</keyword>
<keyword id="KW-0234">DNA repair</keyword>
<keyword id="KW-0378">Hydrolase</keyword>
<keyword id="KW-1185">Reference proteome</keyword>
<gene>
    <name type="ordered locus">Noc_0079</name>
</gene>
<sequence>MTDLLPPRFYARDALEVAADLLGASLCREQVVLRITEVEAYRWPEDTANHGRHGQTLRNEPLWGPPGRVYLYLCYGIHHLLNLVTGEEGQAAAVLIRACEPVAGLDLIQRRRRGKIKPGLLTGPGKVGAALGLDLSWNHHPLYEPGGLEVRRGTPVAALLAGPRVGIAYAHPEHRDAPWRLAIPDNPWVSCRSQLQPRQQN</sequence>
<accession>Q3JEY0</accession>
<proteinExistence type="inferred from homology"/>
<comment type="similarity">
    <text evidence="1">Belongs to the DNA glycosylase MPG family.</text>
</comment>